<organism>
    <name type="scientific">Lactococcus lactis subsp. cremoris (strain MG1363)</name>
    <dbReference type="NCBI Taxonomy" id="416870"/>
    <lineage>
        <taxon>Bacteria</taxon>
        <taxon>Bacillati</taxon>
        <taxon>Bacillota</taxon>
        <taxon>Bacilli</taxon>
        <taxon>Lactobacillales</taxon>
        <taxon>Streptococcaceae</taxon>
        <taxon>Lactococcus</taxon>
        <taxon>Lactococcus cremoris subsp. cremoris</taxon>
    </lineage>
</organism>
<gene>
    <name evidence="1" type="primary">ezrA</name>
    <name type="ordered locus">llmg_2428</name>
</gene>
<dbReference type="EMBL" id="AM406671">
    <property type="protein sequence ID" value="CAL98992.1"/>
    <property type="molecule type" value="Genomic_DNA"/>
</dbReference>
<dbReference type="RefSeq" id="WP_011836066.1">
    <property type="nucleotide sequence ID" value="NC_009004.1"/>
</dbReference>
<dbReference type="SMR" id="A2RNU8"/>
<dbReference type="STRING" id="416870.llmg_2428"/>
<dbReference type="GeneID" id="61110476"/>
<dbReference type="KEGG" id="llm:llmg_2428"/>
<dbReference type="eggNOG" id="COG4477">
    <property type="taxonomic scope" value="Bacteria"/>
</dbReference>
<dbReference type="HOGENOM" id="CLU_034079_2_0_9"/>
<dbReference type="OrthoDB" id="1654473at2"/>
<dbReference type="PhylomeDB" id="A2RNU8"/>
<dbReference type="Proteomes" id="UP000000364">
    <property type="component" value="Chromosome"/>
</dbReference>
<dbReference type="GO" id="GO:0005886">
    <property type="term" value="C:plasma membrane"/>
    <property type="evidence" value="ECO:0007669"/>
    <property type="project" value="UniProtKB-SubCell"/>
</dbReference>
<dbReference type="GO" id="GO:0005940">
    <property type="term" value="C:septin ring"/>
    <property type="evidence" value="ECO:0007669"/>
    <property type="project" value="InterPro"/>
</dbReference>
<dbReference type="GO" id="GO:0000917">
    <property type="term" value="P:division septum assembly"/>
    <property type="evidence" value="ECO:0007669"/>
    <property type="project" value="UniProtKB-KW"/>
</dbReference>
<dbReference type="GO" id="GO:0000921">
    <property type="term" value="P:septin ring assembly"/>
    <property type="evidence" value="ECO:0007669"/>
    <property type="project" value="InterPro"/>
</dbReference>
<dbReference type="HAMAP" id="MF_00728">
    <property type="entry name" value="EzrA"/>
    <property type="match status" value="1"/>
</dbReference>
<dbReference type="InterPro" id="IPR010379">
    <property type="entry name" value="EzrA"/>
</dbReference>
<dbReference type="NCBIfam" id="NF003410">
    <property type="entry name" value="PRK04778.1-4"/>
    <property type="match status" value="1"/>
</dbReference>
<dbReference type="Pfam" id="PF06160">
    <property type="entry name" value="EzrA"/>
    <property type="match status" value="1"/>
</dbReference>
<comment type="function">
    <text evidence="1">Negative regulator of FtsZ ring formation; modulates the frequency and position of FtsZ ring formation. Inhibits FtsZ ring formation at polar sites. Interacts either with FtsZ or with one of its binding partners to promote depolymerization.</text>
</comment>
<comment type="subcellular location">
    <subcellularLocation>
        <location evidence="1">Cell membrane</location>
        <topology evidence="1">Single-pass membrane protein</topology>
    </subcellularLocation>
    <text evidence="1">Colocalized with FtsZ to the nascent septal site.</text>
</comment>
<comment type="similarity">
    <text evidence="1">Belongs to the EzrA family.</text>
</comment>
<keyword id="KW-0131">Cell cycle</keyword>
<keyword id="KW-0132">Cell division</keyword>
<keyword id="KW-1003">Cell membrane</keyword>
<keyword id="KW-0175">Coiled coil</keyword>
<keyword id="KW-0472">Membrane</keyword>
<keyword id="KW-0717">Septation</keyword>
<keyword id="KW-0812">Transmembrane</keyword>
<keyword id="KW-1133">Transmembrane helix</keyword>
<evidence type="ECO:0000255" key="1">
    <source>
        <dbReference type="HAMAP-Rule" id="MF_00728"/>
    </source>
</evidence>
<sequence>MSSTVIILIVVLLVILVAFYAFAILMRKKTEDRILALEERKESLFDLPVQEEIDSVKKMHLVGQSQTIFREWNQKWLDLSSNSFADLEEHIFEAEQLNDSFHFFRARESVADSEAQIEMMEGDVEGIRQGVAQLVEQEKRNSNKIQESLDLYDNLRSDIADNADLYGTVITELEKHLANIETEFSQFVTLNSTGDPIEAAEVLETAEEHTIALRAITEQIPSFIKTIEKDVPKRLEELQEASDKFIAEDYILPENVNLKERMDDLQHHLEESSSLLEQFELDRVEAELDLIQERVEELYSIFEREYSARRNVEKRSSVLKEYIEHIRVNNKNLLLEIDHVTQAYILSGNEKGYVRGYQEHLESLDADVDEIIANIEAKAIPYSSLSRRVNSVVNALEDIEKNQIKISETLSGLRDEERAAQEIAERFDSELRTIKRYVEKCNLPGLPKDYLDLFFMTGDRVQNLFKELGRVRINIDTINHLVDVSTEDMHVLKEATTNLTDHAVLAEQLIQYANRYKASNEQVAQGISRALQLFENSRDYDGSFDEISKTLEIVEPGAASRISGVYFKNKPTPDYL</sequence>
<name>EZRA_LACLM</name>
<proteinExistence type="inferred from homology"/>
<feature type="chain" id="PRO_1000045898" description="Septation ring formation regulator EzrA">
    <location>
        <begin position="1"/>
        <end position="576"/>
    </location>
</feature>
<feature type="topological domain" description="Extracellular" evidence="1">
    <location>
        <begin position="1"/>
        <end position="7"/>
    </location>
</feature>
<feature type="transmembrane region" description="Helical" evidence="1">
    <location>
        <begin position="8"/>
        <end position="26"/>
    </location>
</feature>
<feature type="topological domain" description="Cytoplasmic" evidence="1">
    <location>
        <begin position="27"/>
        <end position="576"/>
    </location>
</feature>
<feature type="coiled-coil region" evidence="1">
    <location>
        <begin position="105"/>
        <end position="134"/>
    </location>
</feature>
<feature type="coiled-coil region" evidence="1">
    <location>
        <begin position="254"/>
        <end position="305"/>
    </location>
</feature>
<feature type="coiled-coil region" evidence="1">
    <location>
        <begin position="356"/>
        <end position="402"/>
    </location>
</feature>
<protein>
    <recommendedName>
        <fullName evidence="1">Septation ring formation regulator EzrA</fullName>
    </recommendedName>
</protein>
<reference key="1">
    <citation type="journal article" date="2007" name="J. Bacteriol.">
        <title>The complete genome sequence of the lactic acid bacterial paradigm Lactococcus lactis subsp. cremoris MG1363.</title>
        <authorList>
            <person name="Wegmann U."/>
            <person name="O'Connell-Motherway M."/>
            <person name="Zomer A."/>
            <person name="Buist G."/>
            <person name="Shearman C."/>
            <person name="Canchaya C."/>
            <person name="Ventura M."/>
            <person name="Goesmann A."/>
            <person name="Gasson M.J."/>
            <person name="Kuipers O.P."/>
            <person name="van Sinderen D."/>
            <person name="Kok J."/>
        </authorList>
    </citation>
    <scope>NUCLEOTIDE SEQUENCE [LARGE SCALE GENOMIC DNA]</scope>
    <source>
        <strain>MG1363</strain>
    </source>
</reference>
<accession>A2RNU8</accession>